<reference key="1">
    <citation type="submission" date="1994-09" db="EMBL/GenBank/DDBJ databases">
        <authorList>
            <person name="Kim S.J."/>
            <person name="Cho H.S."/>
            <person name="Yu J.S."/>
            <person name="Kwon C.S."/>
            <person name="Kwon S.Y."/>
            <person name="Park E.K."/>
            <person name="Paek K.H."/>
        </authorList>
    </citation>
    <scope>NUCLEOTIDE SEQUENCE [GENOMIC RNA]</scope>
</reference>
<accession>Q83268</accession>
<proteinExistence type="inferred from homology"/>
<feature type="chain" id="PRO_0000083240" description="Movement protein">
    <location>
        <begin position="1"/>
        <end position="280"/>
    </location>
</feature>
<feature type="region of interest" description="Disordered" evidence="2">
    <location>
        <begin position="248"/>
        <end position="267"/>
    </location>
</feature>
<feature type="compositionally biased region" description="Low complexity" evidence="2">
    <location>
        <begin position="255"/>
        <end position="267"/>
    </location>
</feature>
<comment type="function">
    <text evidence="1">Transports viral genome to neighboring plant cells directly through plasmosdesmata, without any budding. The movement protein allows efficient cell to cell propagation, by bypassing the host cell wall barrier. Acts by forming a tubular structure at the host plasmodesmata, enlarging it enough to allow free passage of virion capsids (By similarity).</text>
</comment>
<comment type="subcellular location">
    <subcellularLocation>
        <location evidence="1">Host cell junction</location>
        <location evidence="1">Host plasmodesma</location>
    </subcellularLocation>
    <text evidence="1">Assembles into long tubular structures at the surface of the infected protoplast.</text>
</comment>
<comment type="similarity">
    <text evidence="3">Belongs to the cucumovirus movement protein family.</text>
</comment>
<organismHost>
    <name type="scientific">Cucumis sativus</name>
    <name type="common">Cucumber</name>
    <dbReference type="NCBI Taxonomy" id="3659"/>
</organismHost>
<organismHost>
    <name type="scientific">Solanum lycopersicum</name>
    <name type="common">Tomato</name>
    <name type="synonym">Lycopersicon esculentum</name>
    <dbReference type="NCBI Taxonomy" id="4081"/>
</organismHost>
<organismHost>
    <name type="scientific">Spinacia oleracea</name>
    <name type="common">Spinach</name>
    <dbReference type="NCBI Taxonomy" id="3562"/>
</organismHost>
<organism>
    <name type="scientific">Cucumber mosaic virus (strain Kor)</name>
    <name type="common">CMV</name>
    <dbReference type="NCBI Taxonomy" id="117116"/>
    <lineage>
        <taxon>Viruses</taxon>
        <taxon>Riboviria</taxon>
        <taxon>Orthornavirae</taxon>
        <taxon>Kitrinoviricota</taxon>
        <taxon>Alsuviricetes</taxon>
        <taxon>Martellivirales</taxon>
        <taxon>Bromoviridae</taxon>
        <taxon>Cucumovirus</taxon>
        <taxon>Cucumber mosaic virus</taxon>
    </lineage>
</organism>
<name>MVP_CMVKO</name>
<protein>
    <recommendedName>
        <fullName>Movement protein</fullName>
        <shortName>MP</shortName>
    </recommendedName>
    <alternativeName>
        <fullName>Protein 3A</fullName>
    </alternativeName>
</protein>
<keyword id="KW-1031">Host cell junction</keyword>
<keyword id="KW-0813">Transport</keyword>
<keyword id="KW-0916">Viral movement protein</keyword>
<sequence length="280" mass="30555">MAFQGTSRTLTQQSSAATSDDLQKILFSPEAIKKMATECDLGRHHWMRADNAISVRPLVPEVTHGRIASFFKSGYDVGELCSKGYMSVPQVLCAVTRTVSTDAEGSLRIYLADLGDKELSPIDGQCVSLHNHDLPALVSFQPTYDCPMETVGNRKRCFAVVIERHGYIGYTGTTASVCSNWQARFSSKNNNYTHIAAGKTLVLPFNRLAEQTKPSAVARLLKSQLNNIESSQYLLTNAKINQNAHVSESEELNVESPPAAIGSSSASRSEAFRPQVVNGL</sequence>
<gene>
    <name type="ORF">ORF3a</name>
</gene>
<dbReference type="EMBL" id="L36251">
    <property type="protein sequence ID" value="AAA46417.1"/>
    <property type="molecule type" value="Genomic_RNA"/>
</dbReference>
<dbReference type="GO" id="GO:0044219">
    <property type="term" value="C:host cell plasmodesma"/>
    <property type="evidence" value="ECO:0007669"/>
    <property type="project" value="UniProtKB-SubCell"/>
</dbReference>
<dbReference type="GO" id="GO:0046740">
    <property type="term" value="P:transport of virus in host, cell to cell"/>
    <property type="evidence" value="ECO:0007669"/>
    <property type="project" value="UniProtKB-KW"/>
</dbReference>
<dbReference type="InterPro" id="IPR000603">
    <property type="entry name" value="MPV"/>
</dbReference>
<dbReference type="Pfam" id="PF00803">
    <property type="entry name" value="3A"/>
    <property type="match status" value="1"/>
</dbReference>
<evidence type="ECO:0000250" key="1"/>
<evidence type="ECO:0000256" key="2">
    <source>
        <dbReference type="SAM" id="MobiDB-lite"/>
    </source>
</evidence>
<evidence type="ECO:0000305" key="3"/>